<keyword id="KW-0997">Cell inner membrane</keyword>
<keyword id="KW-1003">Cell membrane</keyword>
<keyword id="KW-0407">Ion channel</keyword>
<keyword id="KW-0406">Ion transport</keyword>
<keyword id="KW-0472">Membrane</keyword>
<keyword id="KW-1185">Reference proteome</keyword>
<keyword id="KW-0812">Transmembrane</keyword>
<keyword id="KW-1133">Transmembrane helix</keyword>
<keyword id="KW-0813">Transport</keyword>
<dbReference type="EMBL" id="AM406670">
    <property type="protein sequence ID" value="CAL96438.1"/>
    <property type="molecule type" value="Genomic_DNA"/>
</dbReference>
<dbReference type="RefSeq" id="WP_011767544.1">
    <property type="nucleotide sequence ID" value="NC_008702.1"/>
</dbReference>
<dbReference type="STRING" id="62928.azo3822"/>
<dbReference type="KEGG" id="aoa:dqs_3974"/>
<dbReference type="KEGG" id="azo:azo3822"/>
<dbReference type="eggNOG" id="COG1970">
    <property type="taxonomic scope" value="Bacteria"/>
</dbReference>
<dbReference type="HOGENOM" id="CLU_095787_2_3_4"/>
<dbReference type="OrthoDB" id="9810350at2"/>
<dbReference type="Proteomes" id="UP000002588">
    <property type="component" value="Chromosome"/>
</dbReference>
<dbReference type="GO" id="GO:0005886">
    <property type="term" value="C:plasma membrane"/>
    <property type="evidence" value="ECO:0007669"/>
    <property type="project" value="UniProtKB-SubCell"/>
</dbReference>
<dbReference type="GO" id="GO:0008381">
    <property type="term" value="F:mechanosensitive monoatomic ion channel activity"/>
    <property type="evidence" value="ECO:0007669"/>
    <property type="project" value="UniProtKB-UniRule"/>
</dbReference>
<dbReference type="FunFam" id="1.10.1200.120:FF:000001">
    <property type="entry name" value="Large-conductance mechanosensitive channel"/>
    <property type="match status" value="1"/>
</dbReference>
<dbReference type="Gene3D" id="1.10.1200.120">
    <property type="entry name" value="Large-conductance mechanosensitive channel, MscL, domain 1"/>
    <property type="match status" value="1"/>
</dbReference>
<dbReference type="HAMAP" id="MF_00115">
    <property type="entry name" value="MscL"/>
    <property type="match status" value="1"/>
</dbReference>
<dbReference type="InterPro" id="IPR019823">
    <property type="entry name" value="Mechanosensitive_channel_CS"/>
</dbReference>
<dbReference type="InterPro" id="IPR001185">
    <property type="entry name" value="MS_channel"/>
</dbReference>
<dbReference type="InterPro" id="IPR037673">
    <property type="entry name" value="MSC/AndL"/>
</dbReference>
<dbReference type="InterPro" id="IPR036019">
    <property type="entry name" value="MscL_channel"/>
</dbReference>
<dbReference type="NCBIfam" id="TIGR00220">
    <property type="entry name" value="mscL"/>
    <property type="match status" value="1"/>
</dbReference>
<dbReference type="NCBIfam" id="NF001843">
    <property type="entry name" value="PRK00567.1-4"/>
    <property type="match status" value="1"/>
</dbReference>
<dbReference type="NCBIfam" id="NF010557">
    <property type="entry name" value="PRK13952.1"/>
    <property type="match status" value="1"/>
</dbReference>
<dbReference type="PANTHER" id="PTHR30266:SF2">
    <property type="entry name" value="LARGE-CONDUCTANCE MECHANOSENSITIVE CHANNEL"/>
    <property type="match status" value="1"/>
</dbReference>
<dbReference type="PANTHER" id="PTHR30266">
    <property type="entry name" value="MECHANOSENSITIVE CHANNEL MSCL"/>
    <property type="match status" value="1"/>
</dbReference>
<dbReference type="Pfam" id="PF01741">
    <property type="entry name" value="MscL"/>
    <property type="match status" value="1"/>
</dbReference>
<dbReference type="PRINTS" id="PR01264">
    <property type="entry name" value="MECHCHANNEL"/>
</dbReference>
<dbReference type="SUPFAM" id="SSF81330">
    <property type="entry name" value="Gated mechanosensitive channel"/>
    <property type="match status" value="1"/>
</dbReference>
<dbReference type="PROSITE" id="PS01327">
    <property type="entry name" value="MSCL"/>
    <property type="match status" value="1"/>
</dbReference>
<organism>
    <name type="scientific">Azoarcus sp. (strain BH72)</name>
    <dbReference type="NCBI Taxonomy" id="418699"/>
    <lineage>
        <taxon>Bacteria</taxon>
        <taxon>Pseudomonadati</taxon>
        <taxon>Pseudomonadota</taxon>
        <taxon>Betaproteobacteria</taxon>
        <taxon>Rhodocyclales</taxon>
        <taxon>Zoogloeaceae</taxon>
        <taxon>Azoarcus</taxon>
    </lineage>
</organism>
<name>MSCL_AZOSB</name>
<sequence length="141" mass="15404">MSFIQEFKEFAMRGNVIDLAVGVIIGGAFGKIVDSLVKDVVMPIVGRLVGGVDFRHLYVNLGSQQYETLEAAEKAGAPLVKYGAFINTTIDFLIIALAIFVAIKAINKLKRSEPPAPAPEPAPEPEDIKLLREIRDALKQR</sequence>
<protein>
    <recommendedName>
        <fullName evidence="1">Large-conductance mechanosensitive channel</fullName>
    </recommendedName>
</protein>
<reference key="1">
    <citation type="journal article" date="2006" name="Nat. Biotechnol.">
        <title>Complete genome of the mutualistic, N2-fixing grass endophyte Azoarcus sp. strain BH72.</title>
        <authorList>
            <person name="Krause A."/>
            <person name="Ramakumar A."/>
            <person name="Bartels D."/>
            <person name="Battistoni F."/>
            <person name="Bekel T."/>
            <person name="Boch J."/>
            <person name="Boehm M."/>
            <person name="Friedrich F."/>
            <person name="Hurek T."/>
            <person name="Krause L."/>
            <person name="Linke B."/>
            <person name="McHardy A.C."/>
            <person name="Sarkar A."/>
            <person name="Schneiker S."/>
            <person name="Syed A.A."/>
            <person name="Thauer R."/>
            <person name="Vorhoelter F.-J."/>
            <person name="Weidner S."/>
            <person name="Puehler A."/>
            <person name="Reinhold-Hurek B."/>
            <person name="Kaiser O."/>
            <person name="Goesmann A."/>
        </authorList>
    </citation>
    <scope>NUCLEOTIDE SEQUENCE [LARGE SCALE GENOMIC DNA]</scope>
    <source>
        <strain>BH72</strain>
    </source>
</reference>
<comment type="function">
    <text evidence="1">Channel that opens in response to stretch forces in the membrane lipid bilayer. May participate in the regulation of osmotic pressure changes within the cell.</text>
</comment>
<comment type="subunit">
    <text evidence="1">Homopentamer.</text>
</comment>
<comment type="subcellular location">
    <subcellularLocation>
        <location evidence="1">Cell inner membrane</location>
        <topology evidence="1">Multi-pass membrane protein</topology>
    </subcellularLocation>
</comment>
<comment type="similarity">
    <text evidence="1">Belongs to the MscL family.</text>
</comment>
<accession>A1KC82</accession>
<gene>
    <name evidence="1" type="primary">mscL</name>
    <name type="ordered locus">azo3822</name>
</gene>
<proteinExistence type="inferred from homology"/>
<evidence type="ECO:0000255" key="1">
    <source>
        <dbReference type="HAMAP-Rule" id="MF_00115"/>
    </source>
</evidence>
<feature type="chain" id="PRO_1000015350" description="Large-conductance mechanosensitive channel">
    <location>
        <begin position="1"/>
        <end position="141"/>
    </location>
</feature>
<feature type="transmembrane region" description="Helical" evidence="1">
    <location>
        <begin position="16"/>
        <end position="36"/>
    </location>
</feature>
<feature type="transmembrane region" description="Helical" evidence="1">
    <location>
        <begin position="83"/>
        <end position="103"/>
    </location>
</feature>